<organism>
    <name type="scientific">Streptococcus agalactiae serotype Ia (strain ATCC 27591 / A909 / CDC SS700)</name>
    <dbReference type="NCBI Taxonomy" id="205921"/>
    <lineage>
        <taxon>Bacteria</taxon>
        <taxon>Bacillati</taxon>
        <taxon>Bacillota</taxon>
        <taxon>Bacilli</taxon>
        <taxon>Lactobacillales</taxon>
        <taxon>Streptococcaceae</taxon>
        <taxon>Streptococcus</taxon>
    </lineage>
</organism>
<feature type="chain" id="PRO_0000241043" description="S-adenosylmethionine synthase">
    <location>
        <begin position="1"/>
        <end position="398"/>
    </location>
</feature>
<feature type="region of interest" description="Flexible loop" evidence="1">
    <location>
        <begin position="100"/>
        <end position="110"/>
    </location>
</feature>
<feature type="binding site" description="in other chain" evidence="1">
    <location>
        <position position="16"/>
    </location>
    <ligand>
        <name>ATP</name>
        <dbReference type="ChEBI" id="CHEBI:30616"/>
        <note>ligand shared between two neighboring subunits</note>
    </ligand>
</feature>
<feature type="binding site" evidence="1">
    <location>
        <position position="18"/>
    </location>
    <ligand>
        <name>Mg(2+)</name>
        <dbReference type="ChEBI" id="CHEBI:18420"/>
    </ligand>
</feature>
<feature type="binding site" evidence="1">
    <location>
        <position position="44"/>
    </location>
    <ligand>
        <name>K(+)</name>
        <dbReference type="ChEBI" id="CHEBI:29103"/>
    </ligand>
</feature>
<feature type="binding site" description="in other chain" evidence="1">
    <location>
        <position position="57"/>
    </location>
    <ligand>
        <name>L-methionine</name>
        <dbReference type="ChEBI" id="CHEBI:57844"/>
        <note>ligand shared between two neighboring subunits</note>
    </ligand>
</feature>
<feature type="binding site" description="in other chain" evidence="1">
    <location>
        <position position="100"/>
    </location>
    <ligand>
        <name>L-methionine</name>
        <dbReference type="ChEBI" id="CHEBI:57844"/>
        <note>ligand shared between two neighboring subunits</note>
    </ligand>
</feature>
<feature type="binding site" description="in other chain" evidence="1">
    <location>
        <begin position="175"/>
        <end position="177"/>
    </location>
    <ligand>
        <name>ATP</name>
        <dbReference type="ChEBI" id="CHEBI:30616"/>
        <note>ligand shared between two neighboring subunits</note>
    </ligand>
</feature>
<feature type="binding site" description="in other chain" evidence="1">
    <location>
        <begin position="242"/>
        <end position="243"/>
    </location>
    <ligand>
        <name>ATP</name>
        <dbReference type="ChEBI" id="CHEBI:30616"/>
        <note>ligand shared between two neighboring subunits</note>
    </ligand>
</feature>
<feature type="binding site" evidence="1">
    <location>
        <position position="251"/>
    </location>
    <ligand>
        <name>ATP</name>
        <dbReference type="ChEBI" id="CHEBI:30616"/>
        <note>ligand shared between two neighboring subunits</note>
    </ligand>
</feature>
<feature type="binding site" evidence="1">
    <location>
        <position position="251"/>
    </location>
    <ligand>
        <name>L-methionine</name>
        <dbReference type="ChEBI" id="CHEBI:57844"/>
        <note>ligand shared between two neighboring subunits</note>
    </ligand>
</feature>
<feature type="binding site" description="in other chain" evidence="1">
    <location>
        <begin position="257"/>
        <end position="258"/>
    </location>
    <ligand>
        <name>ATP</name>
        <dbReference type="ChEBI" id="CHEBI:30616"/>
        <note>ligand shared between two neighboring subunits</note>
    </ligand>
</feature>
<feature type="binding site" evidence="1">
    <location>
        <position position="274"/>
    </location>
    <ligand>
        <name>ATP</name>
        <dbReference type="ChEBI" id="CHEBI:30616"/>
        <note>ligand shared between two neighboring subunits</note>
    </ligand>
</feature>
<feature type="binding site" evidence="1">
    <location>
        <position position="278"/>
    </location>
    <ligand>
        <name>ATP</name>
        <dbReference type="ChEBI" id="CHEBI:30616"/>
        <note>ligand shared between two neighboring subunits</note>
    </ligand>
</feature>
<feature type="binding site" description="in other chain" evidence="1">
    <location>
        <position position="282"/>
    </location>
    <ligand>
        <name>L-methionine</name>
        <dbReference type="ChEBI" id="CHEBI:57844"/>
        <note>ligand shared between two neighboring subunits</note>
    </ligand>
</feature>
<gene>
    <name evidence="1" type="primary">metK</name>
    <name type="ordered locus">SAK_0954</name>
</gene>
<accession>Q3K1M7</accession>
<keyword id="KW-0067">ATP-binding</keyword>
<keyword id="KW-0963">Cytoplasm</keyword>
<keyword id="KW-0460">Magnesium</keyword>
<keyword id="KW-0479">Metal-binding</keyword>
<keyword id="KW-0547">Nucleotide-binding</keyword>
<keyword id="KW-0554">One-carbon metabolism</keyword>
<keyword id="KW-0630">Potassium</keyword>
<keyword id="KW-0808">Transferase</keyword>
<name>METK_STRA1</name>
<sequence>MSERKLFTSESVSEGHPDKIADQISDAILDAILEQDPDAHVAAETAVYTGSVHVFGEISTTAYVDINRVVRNTIAEIGYDKAEYGFSAESVGVHPSLVEQSPDIAQGVNEALEVRGSLEQDPLDLIGAGDQGLMFGFAVDETPELMPLPISLAHQLVKKLTDLRKSGELTYLRPDAKSQVTVEYDENDQPIRVDAVVISTQHDPNVTNDQLHKDVIEKVINEVIPSHYLDDQTKFFINPTGRFVIGGPQGDSGLTGRKIIVDTYGGYSRHGGGAFSGKDATKVDRSASYAARYIAKNIVAADLAKKVEVQLAYAIGVAQPVSVRVDTFGTGVIAEADLEAAVRQIFDLRPAGIINMLDLKRPIYRQTAAYGHMGRTDIDLPWERVDKVQALKDFIASK</sequence>
<reference key="1">
    <citation type="journal article" date="2005" name="Proc. Natl. Acad. Sci. U.S.A.">
        <title>Genome analysis of multiple pathogenic isolates of Streptococcus agalactiae: implications for the microbial 'pan-genome'.</title>
        <authorList>
            <person name="Tettelin H."/>
            <person name="Masignani V."/>
            <person name="Cieslewicz M.J."/>
            <person name="Donati C."/>
            <person name="Medini D."/>
            <person name="Ward N.L."/>
            <person name="Angiuoli S.V."/>
            <person name="Crabtree J."/>
            <person name="Jones A.L."/>
            <person name="Durkin A.S."/>
            <person name="DeBoy R.T."/>
            <person name="Davidsen T.M."/>
            <person name="Mora M."/>
            <person name="Scarselli M."/>
            <person name="Margarit y Ros I."/>
            <person name="Peterson J.D."/>
            <person name="Hauser C.R."/>
            <person name="Sundaram J.P."/>
            <person name="Nelson W.C."/>
            <person name="Madupu R."/>
            <person name="Brinkac L.M."/>
            <person name="Dodson R.J."/>
            <person name="Rosovitz M.J."/>
            <person name="Sullivan S.A."/>
            <person name="Daugherty S.C."/>
            <person name="Haft D.H."/>
            <person name="Selengut J."/>
            <person name="Gwinn M.L."/>
            <person name="Zhou L."/>
            <person name="Zafar N."/>
            <person name="Khouri H."/>
            <person name="Radune D."/>
            <person name="Dimitrov G."/>
            <person name="Watkins K."/>
            <person name="O'Connor K.J."/>
            <person name="Smith S."/>
            <person name="Utterback T.R."/>
            <person name="White O."/>
            <person name="Rubens C.E."/>
            <person name="Grandi G."/>
            <person name="Madoff L.C."/>
            <person name="Kasper D.L."/>
            <person name="Telford J.L."/>
            <person name="Wessels M.R."/>
            <person name="Rappuoli R."/>
            <person name="Fraser C.M."/>
        </authorList>
    </citation>
    <scope>NUCLEOTIDE SEQUENCE [LARGE SCALE GENOMIC DNA]</scope>
    <source>
        <strain>ATCC 27591 / A909 / CDC SS700</strain>
    </source>
</reference>
<proteinExistence type="inferred from homology"/>
<evidence type="ECO:0000255" key="1">
    <source>
        <dbReference type="HAMAP-Rule" id="MF_00086"/>
    </source>
</evidence>
<protein>
    <recommendedName>
        <fullName evidence="1">S-adenosylmethionine synthase</fullName>
        <shortName evidence="1">AdoMet synthase</shortName>
        <ecNumber evidence="1">2.5.1.6</ecNumber>
    </recommendedName>
    <alternativeName>
        <fullName evidence="1">MAT</fullName>
    </alternativeName>
    <alternativeName>
        <fullName evidence="1">Methionine adenosyltransferase</fullName>
    </alternativeName>
</protein>
<dbReference type="EC" id="2.5.1.6" evidence="1"/>
<dbReference type="EMBL" id="CP000114">
    <property type="protein sequence ID" value="ABA44536.1"/>
    <property type="molecule type" value="Genomic_DNA"/>
</dbReference>
<dbReference type="RefSeq" id="WP_000003955.1">
    <property type="nucleotide sequence ID" value="NC_007432.1"/>
</dbReference>
<dbReference type="SMR" id="Q3K1M7"/>
<dbReference type="KEGG" id="sak:SAK_0954"/>
<dbReference type="HOGENOM" id="CLU_041802_1_1_9"/>
<dbReference type="UniPathway" id="UPA00315">
    <property type="reaction ID" value="UER00080"/>
</dbReference>
<dbReference type="GO" id="GO:0005737">
    <property type="term" value="C:cytoplasm"/>
    <property type="evidence" value="ECO:0007669"/>
    <property type="project" value="UniProtKB-SubCell"/>
</dbReference>
<dbReference type="GO" id="GO:0005524">
    <property type="term" value="F:ATP binding"/>
    <property type="evidence" value="ECO:0007669"/>
    <property type="project" value="UniProtKB-UniRule"/>
</dbReference>
<dbReference type="GO" id="GO:0000287">
    <property type="term" value="F:magnesium ion binding"/>
    <property type="evidence" value="ECO:0007669"/>
    <property type="project" value="UniProtKB-UniRule"/>
</dbReference>
<dbReference type="GO" id="GO:0004478">
    <property type="term" value="F:methionine adenosyltransferase activity"/>
    <property type="evidence" value="ECO:0007669"/>
    <property type="project" value="UniProtKB-UniRule"/>
</dbReference>
<dbReference type="GO" id="GO:0006730">
    <property type="term" value="P:one-carbon metabolic process"/>
    <property type="evidence" value="ECO:0007669"/>
    <property type="project" value="UniProtKB-KW"/>
</dbReference>
<dbReference type="GO" id="GO:0006556">
    <property type="term" value="P:S-adenosylmethionine biosynthetic process"/>
    <property type="evidence" value="ECO:0007669"/>
    <property type="project" value="UniProtKB-UniRule"/>
</dbReference>
<dbReference type="CDD" id="cd18079">
    <property type="entry name" value="S-AdoMet_synt"/>
    <property type="match status" value="1"/>
</dbReference>
<dbReference type="FunFam" id="3.30.300.10:FF:000003">
    <property type="entry name" value="S-adenosylmethionine synthase"/>
    <property type="match status" value="1"/>
</dbReference>
<dbReference type="Gene3D" id="3.30.300.10">
    <property type="match status" value="3"/>
</dbReference>
<dbReference type="HAMAP" id="MF_00086">
    <property type="entry name" value="S_AdoMet_synth1"/>
    <property type="match status" value="1"/>
</dbReference>
<dbReference type="InterPro" id="IPR022631">
    <property type="entry name" value="ADOMET_SYNTHASE_CS"/>
</dbReference>
<dbReference type="InterPro" id="IPR022630">
    <property type="entry name" value="S-AdoMet_synt_C"/>
</dbReference>
<dbReference type="InterPro" id="IPR022629">
    <property type="entry name" value="S-AdoMet_synt_central"/>
</dbReference>
<dbReference type="InterPro" id="IPR022628">
    <property type="entry name" value="S-AdoMet_synt_N"/>
</dbReference>
<dbReference type="InterPro" id="IPR002133">
    <property type="entry name" value="S-AdoMet_synthetase"/>
</dbReference>
<dbReference type="InterPro" id="IPR022636">
    <property type="entry name" value="S-AdoMet_synthetase_sfam"/>
</dbReference>
<dbReference type="NCBIfam" id="TIGR01034">
    <property type="entry name" value="metK"/>
    <property type="match status" value="1"/>
</dbReference>
<dbReference type="PANTHER" id="PTHR11964">
    <property type="entry name" value="S-ADENOSYLMETHIONINE SYNTHETASE"/>
    <property type="match status" value="1"/>
</dbReference>
<dbReference type="Pfam" id="PF02773">
    <property type="entry name" value="S-AdoMet_synt_C"/>
    <property type="match status" value="1"/>
</dbReference>
<dbReference type="Pfam" id="PF02772">
    <property type="entry name" value="S-AdoMet_synt_M"/>
    <property type="match status" value="1"/>
</dbReference>
<dbReference type="Pfam" id="PF00438">
    <property type="entry name" value="S-AdoMet_synt_N"/>
    <property type="match status" value="1"/>
</dbReference>
<dbReference type="PIRSF" id="PIRSF000497">
    <property type="entry name" value="MAT"/>
    <property type="match status" value="1"/>
</dbReference>
<dbReference type="SUPFAM" id="SSF55973">
    <property type="entry name" value="S-adenosylmethionine synthetase"/>
    <property type="match status" value="3"/>
</dbReference>
<dbReference type="PROSITE" id="PS00376">
    <property type="entry name" value="ADOMET_SYNTHASE_1"/>
    <property type="match status" value="1"/>
</dbReference>
<dbReference type="PROSITE" id="PS00377">
    <property type="entry name" value="ADOMET_SYNTHASE_2"/>
    <property type="match status" value="1"/>
</dbReference>
<comment type="function">
    <text evidence="1">Catalyzes the formation of S-adenosylmethionine (AdoMet) from methionine and ATP. The overall synthetic reaction is composed of two sequential steps, AdoMet formation and the subsequent tripolyphosphate hydrolysis which occurs prior to release of AdoMet from the enzyme.</text>
</comment>
<comment type="catalytic activity">
    <reaction evidence="1">
        <text>L-methionine + ATP + H2O = S-adenosyl-L-methionine + phosphate + diphosphate</text>
        <dbReference type="Rhea" id="RHEA:21080"/>
        <dbReference type="ChEBI" id="CHEBI:15377"/>
        <dbReference type="ChEBI" id="CHEBI:30616"/>
        <dbReference type="ChEBI" id="CHEBI:33019"/>
        <dbReference type="ChEBI" id="CHEBI:43474"/>
        <dbReference type="ChEBI" id="CHEBI:57844"/>
        <dbReference type="ChEBI" id="CHEBI:59789"/>
        <dbReference type="EC" id="2.5.1.6"/>
    </reaction>
</comment>
<comment type="cofactor">
    <cofactor evidence="1">
        <name>Mg(2+)</name>
        <dbReference type="ChEBI" id="CHEBI:18420"/>
    </cofactor>
    <text evidence="1">Binds 2 divalent ions per subunit.</text>
</comment>
<comment type="cofactor">
    <cofactor evidence="1">
        <name>K(+)</name>
        <dbReference type="ChEBI" id="CHEBI:29103"/>
    </cofactor>
    <text evidence="1">Binds 1 potassium ion per subunit.</text>
</comment>
<comment type="pathway">
    <text evidence="1">Amino-acid biosynthesis; S-adenosyl-L-methionine biosynthesis; S-adenosyl-L-methionine from L-methionine: step 1/1.</text>
</comment>
<comment type="subunit">
    <text evidence="1">Homotetramer; dimer of dimers.</text>
</comment>
<comment type="subcellular location">
    <subcellularLocation>
        <location evidence="1">Cytoplasm</location>
    </subcellularLocation>
</comment>
<comment type="similarity">
    <text evidence="1">Belongs to the AdoMet synthase family.</text>
</comment>